<name>CDC73_YEAST</name>
<organism>
    <name type="scientific">Saccharomyces cerevisiae (strain ATCC 204508 / S288c)</name>
    <name type="common">Baker's yeast</name>
    <dbReference type="NCBI Taxonomy" id="559292"/>
    <lineage>
        <taxon>Eukaryota</taxon>
        <taxon>Fungi</taxon>
        <taxon>Dikarya</taxon>
        <taxon>Ascomycota</taxon>
        <taxon>Saccharomycotina</taxon>
        <taxon>Saccharomycetes</taxon>
        <taxon>Saccharomycetales</taxon>
        <taxon>Saccharomycetaceae</taxon>
        <taxon>Saccharomyces</taxon>
    </lineage>
</organism>
<reference key="1">
    <citation type="journal article" date="1997" name="Nature">
        <title>The nucleotide sequence of Saccharomyces cerevisiae chromosome XII.</title>
        <authorList>
            <person name="Johnston M."/>
            <person name="Hillier L.W."/>
            <person name="Riles L."/>
            <person name="Albermann K."/>
            <person name="Andre B."/>
            <person name="Ansorge W."/>
            <person name="Benes V."/>
            <person name="Brueckner M."/>
            <person name="Delius H."/>
            <person name="Dubois E."/>
            <person name="Duesterhoeft A."/>
            <person name="Entian K.-D."/>
            <person name="Floeth M."/>
            <person name="Goffeau A."/>
            <person name="Hebling U."/>
            <person name="Heumann K."/>
            <person name="Heuss-Neitzel D."/>
            <person name="Hilbert H."/>
            <person name="Hilger F."/>
            <person name="Kleine K."/>
            <person name="Koetter P."/>
            <person name="Louis E.J."/>
            <person name="Messenguy F."/>
            <person name="Mewes H.-W."/>
            <person name="Miosga T."/>
            <person name="Moestl D."/>
            <person name="Mueller-Auer S."/>
            <person name="Nentwich U."/>
            <person name="Obermaier B."/>
            <person name="Piravandi E."/>
            <person name="Pohl T.M."/>
            <person name="Portetelle D."/>
            <person name="Purnelle B."/>
            <person name="Rechmann S."/>
            <person name="Rieger M."/>
            <person name="Rinke M."/>
            <person name="Rose M."/>
            <person name="Scharfe M."/>
            <person name="Scherens B."/>
            <person name="Scholler P."/>
            <person name="Schwager C."/>
            <person name="Schwarz S."/>
            <person name="Underwood A.P."/>
            <person name="Urrestarazu L.A."/>
            <person name="Vandenbol M."/>
            <person name="Verhasselt P."/>
            <person name="Vierendeels F."/>
            <person name="Voet M."/>
            <person name="Volckaert G."/>
            <person name="Voss H."/>
            <person name="Wambutt R."/>
            <person name="Wedler E."/>
            <person name="Wedler H."/>
            <person name="Zimmermann F.K."/>
            <person name="Zollner A."/>
            <person name="Hani J."/>
            <person name="Hoheisel J.D."/>
        </authorList>
    </citation>
    <scope>NUCLEOTIDE SEQUENCE [LARGE SCALE GENOMIC DNA]</scope>
    <source>
        <strain>ATCC 204508 / S288c</strain>
    </source>
</reference>
<reference key="2">
    <citation type="journal article" date="2014" name="G3 (Bethesda)">
        <title>The reference genome sequence of Saccharomyces cerevisiae: Then and now.</title>
        <authorList>
            <person name="Engel S.R."/>
            <person name="Dietrich F.S."/>
            <person name="Fisk D.G."/>
            <person name="Binkley G."/>
            <person name="Balakrishnan R."/>
            <person name="Costanzo M.C."/>
            <person name="Dwight S.S."/>
            <person name="Hitz B.C."/>
            <person name="Karra K."/>
            <person name="Nash R.S."/>
            <person name="Weng S."/>
            <person name="Wong E.D."/>
            <person name="Lloyd P."/>
            <person name="Skrzypek M.S."/>
            <person name="Miyasato S.R."/>
            <person name="Simison M."/>
            <person name="Cherry J.M."/>
        </authorList>
    </citation>
    <scope>GENOME REANNOTATION</scope>
    <source>
        <strain>ATCC 204508 / S288c</strain>
    </source>
</reference>
<reference key="3">
    <citation type="journal article" date="1997" name="Mol. Cell. Biol.">
        <title>Cdc73p and Paf1p are found in a novel RNA polymerase II-containing complex distinct from the Srbp-containing holoenzyme.</title>
        <authorList>
            <person name="Shi X."/>
            <person name="Chang M."/>
            <person name="Wolf A.J."/>
            <person name="Chang C.-H."/>
            <person name="Frazer-Abel A.A."/>
            <person name="Wade P.A."/>
            <person name="Burton Z.F."/>
            <person name="Jaehning J.A."/>
        </authorList>
    </citation>
    <scope>FUNCTION</scope>
    <scope>SUBUNIT</scope>
    <scope>SUBCELLULAR LOCATION</scope>
</reference>
<reference key="4">
    <citation type="journal article" date="1999" name="Nucleic Acids Res.">
        <title>A role for Ctr9p and Paf1p in the regulation of G1 cyclin expression in yeast.</title>
        <authorList>
            <person name="Koch C."/>
            <person name="Wollmann P."/>
            <person name="Dahl M."/>
            <person name="Lottspeich F."/>
        </authorList>
    </citation>
    <scope>SUBUNIT</scope>
</reference>
<reference key="5">
    <citation type="journal article" date="2002" name="Mol. Cell. Biol.">
        <title>Ctr9, Rtf1, and Leo1 are components of the Paf1/RNA polymerase II complex.</title>
        <authorList>
            <person name="Mueller C.L."/>
            <person name="Jaehning J.A."/>
        </authorList>
    </citation>
    <scope>IDENTIFICATION IN THE PAF1 COMPLEX</scope>
</reference>
<reference key="6">
    <citation type="journal article" date="2002" name="Mol. Cell. Biol.">
        <title>RNA polymerase II elongation factors of Saccharomyces cerevisiae: a targeted proteomics approach.</title>
        <authorList>
            <person name="Krogan N.J."/>
            <person name="Kim M."/>
            <person name="Ahn S.H."/>
            <person name="Zhong G."/>
            <person name="Kobor M.S."/>
            <person name="Cagney G."/>
            <person name="Emili A."/>
            <person name="Shilatifard A."/>
            <person name="Buratowski S."/>
            <person name="Greenblatt J.F."/>
        </authorList>
    </citation>
    <scope>INTERACTION WITH POB3 AND SPT16</scope>
</reference>
<reference key="7">
    <citation type="journal article" date="2005" name="Eukaryot. Cell">
        <title>Separation of the Saccharomyces cerevisiae Paf1 complex from RNA polymerase II results in changes in its subnuclear localization.</title>
        <authorList>
            <person name="Porter S.E."/>
            <person name="Penheiter K.L."/>
            <person name="Jaehning J.A."/>
        </authorList>
    </citation>
    <scope>FUNCTION</scope>
    <scope>SUBCELLULAR LOCATION</scope>
</reference>
<reference key="8">
    <citation type="journal article" date="2005" name="Mol. Cell">
        <title>A requirement for the Saccharomyces cerevisiae Paf1 complex in snoRNA 3' end formation.</title>
        <authorList>
            <person name="Sheldon K.E."/>
            <person name="Mauger D.M."/>
            <person name="Arndt K.M."/>
        </authorList>
    </citation>
    <scope>FUNCTION</scope>
</reference>
<reference key="9">
    <citation type="journal article" date="2008" name="Mol. Cell. Proteomics">
        <title>A multidimensional chromatography technology for in-depth phosphoproteome analysis.</title>
        <authorList>
            <person name="Albuquerque C.P."/>
            <person name="Smolka M.B."/>
            <person name="Payne S.H."/>
            <person name="Bafna V."/>
            <person name="Eng J."/>
            <person name="Zhou H."/>
        </authorList>
    </citation>
    <scope>PHOSPHORYLATION [LARGE SCALE ANALYSIS] AT SER-114 AND SER-150</scope>
    <scope>IDENTIFICATION BY MASS SPECTROMETRY [LARGE SCALE ANALYSIS]</scope>
</reference>
<sequence length="393" mass="44456">MANSLDRLREHLKNGDKLVLKNNEGQSTDDITKATMVETLSSDGSTQDSFPLNEETEIEIDGSLVQLRIIVHCWMNKDSSAADYLADCQNKQLTNVSFLQRTDLINWLSGNTESSQYLKAPGQKGETSDKVDIENKTLAGELSTVKSTTSASLENDSEVSDPVVVETMKHERILVDHNSALRGAKPINFGYLIKDAELKLVQSIKGSLRGSKLPPGHKGAHGRISKTNGSSGGPRKDPIILIPSAASSILTVANIKQFLLESKYVNPRNLPSVPNGLVNIEKNFERISRPIRFIIVDNTRMFTKPEYWDRVVAIFTTGHTWQFNNYQWNSPQELFQRCKGYYFHFAGDSVPQHVQQWNVEKVELDKNKRFKDVEVVRYFWHSLEKELISRGYR</sequence>
<proteinExistence type="evidence at protein level"/>
<feature type="chain" id="PRO_0000238580" description="Cell division control protein 73">
    <location>
        <begin position="1"/>
        <end position="393"/>
    </location>
</feature>
<feature type="region of interest" description="Disordered" evidence="1">
    <location>
        <begin position="210"/>
        <end position="235"/>
    </location>
</feature>
<feature type="modified residue" description="Phosphoserine" evidence="9">
    <location>
        <position position="114"/>
    </location>
</feature>
<feature type="modified residue" description="Phosphoserine" evidence="9">
    <location>
        <position position="150"/>
    </location>
</feature>
<feature type="helix" evidence="12">
    <location>
        <begin position="162"/>
        <end position="169"/>
    </location>
</feature>
<feature type="helix" evidence="12">
    <location>
        <begin position="179"/>
        <end position="182"/>
    </location>
</feature>
<feature type="helix" evidence="12">
    <location>
        <begin position="191"/>
        <end position="199"/>
    </location>
</feature>
<feature type="helix" evidence="12">
    <location>
        <begin position="201"/>
        <end position="204"/>
    </location>
</feature>
<feature type="strand" evidence="10">
    <location>
        <begin position="239"/>
        <end position="241"/>
    </location>
</feature>
<feature type="strand" evidence="11">
    <location>
        <begin position="248"/>
        <end position="250"/>
    </location>
</feature>
<feature type="turn" evidence="10">
    <location>
        <begin position="252"/>
        <end position="254"/>
    </location>
</feature>
<feature type="helix" evidence="10">
    <location>
        <begin position="255"/>
        <end position="261"/>
    </location>
</feature>
<feature type="helix" evidence="10">
    <location>
        <begin position="267"/>
        <end position="269"/>
    </location>
</feature>
<feature type="strand" evidence="10">
    <location>
        <begin position="276"/>
        <end position="282"/>
    </location>
</feature>
<feature type="strand" evidence="10">
    <location>
        <begin position="287"/>
        <end position="289"/>
    </location>
</feature>
<feature type="strand" evidence="10">
    <location>
        <begin position="291"/>
        <end position="299"/>
    </location>
</feature>
<feature type="helix" evidence="10">
    <location>
        <begin position="305"/>
        <end position="310"/>
    </location>
</feature>
<feature type="strand" evidence="10">
    <location>
        <begin position="311"/>
        <end position="315"/>
    </location>
</feature>
<feature type="helix" evidence="10">
    <location>
        <begin position="320"/>
        <end position="323"/>
    </location>
</feature>
<feature type="strand" evidence="10">
    <location>
        <begin position="326"/>
        <end position="328"/>
    </location>
</feature>
<feature type="helix" evidence="10">
    <location>
        <begin position="331"/>
        <end position="337"/>
    </location>
</feature>
<feature type="strand" evidence="10">
    <location>
        <begin position="338"/>
        <end position="345"/>
    </location>
</feature>
<feature type="helix" evidence="10">
    <location>
        <begin position="352"/>
        <end position="356"/>
    </location>
</feature>
<feature type="strand" evidence="10">
    <location>
        <begin position="357"/>
        <end position="364"/>
    </location>
</feature>
<feature type="helix" evidence="11">
    <location>
        <begin position="369"/>
        <end position="371"/>
    </location>
</feature>
<feature type="helix" evidence="10">
    <location>
        <begin position="372"/>
        <end position="389"/>
    </location>
</feature>
<dbReference type="EMBL" id="U20162">
    <property type="protein sequence ID" value="AAB67500.1"/>
    <property type="molecule type" value="Genomic_DNA"/>
</dbReference>
<dbReference type="EMBL" id="BK006945">
    <property type="protein sequence ID" value="DAA09720.1"/>
    <property type="molecule type" value="Genomic_DNA"/>
</dbReference>
<dbReference type="PIR" id="S59383">
    <property type="entry name" value="S59383"/>
</dbReference>
<dbReference type="RefSeq" id="NP_013522.1">
    <property type="nucleotide sequence ID" value="NM_001182306.1"/>
</dbReference>
<dbReference type="PDB" id="3V46">
    <property type="method" value="X-ray"/>
    <property type="resolution" value="1.55 A"/>
    <property type="chains" value="A=230-393"/>
</dbReference>
<dbReference type="PDB" id="4DM4">
    <property type="method" value="X-ray"/>
    <property type="resolution" value="2.19 A"/>
    <property type="chains" value="A/B=235-393"/>
</dbReference>
<dbReference type="PDB" id="7DKH">
    <property type="method" value="X-ray"/>
    <property type="resolution" value="2.90 A"/>
    <property type="chains" value="C/G/K=155-211"/>
</dbReference>
<dbReference type="PDBsum" id="3V46"/>
<dbReference type="PDBsum" id="4DM4"/>
<dbReference type="PDBsum" id="7DKH"/>
<dbReference type="SMR" id="Q06697"/>
<dbReference type="BioGRID" id="31676">
    <property type="interactions" value="1028"/>
</dbReference>
<dbReference type="ComplexPortal" id="CPX-1726">
    <property type="entry name" value="PAF1 complex"/>
</dbReference>
<dbReference type="DIP" id="DIP-1148N"/>
<dbReference type="FunCoup" id="Q06697">
    <property type="interactions" value="274"/>
</dbReference>
<dbReference type="IntAct" id="Q06697">
    <property type="interactions" value="26"/>
</dbReference>
<dbReference type="MINT" id="Q06697"/>
<dbReference type="STRING" id="4932.YLR418C"/>
<dbReference type="iPTMnet" id="Q06697"/>
<dbReference type="PaxDb" id="4932-YLR418C"/>
<dbReference type="PeptideAtlas" id="Q06697"/>
<dbReference type="EnsemblFungi" id="YLR418C_mRNA">
    <property type="protein sequence ID" value="YLR418C"/>
    <property type="gene ID" value="YLR418C"/>
</dbReference>
<dbReference type="GeneID" id="851136"/>
<dbReference type="KEGG" id="sce:YLR418C"/>
<dbReference type="AGR" id="SGD:S000004410"/>
<dbReference type="SGD" id="S000004410">
    <property type="gene designation" value="CDC73"/>
</dbReference>
<dbReference type="VEuPathDB" id="FungiDB:YLR418C"/>
<dbReference type="eggNOG" id="KOG3786">
    <property type="taxonomic scope" value="Eukaryota"/>
</dbReference>
<dbReference type="GeneTree" id="ENSGT00390000001114"/>
<dbReference type="HOGENOM" id="CLU_025849_2_0_1"/>
<dbReference type="InParanoid" id="Q06697"/>
<dbReference type="OMA" id="GYYFHFA"/>
<dbReference type="OrthoDB" id="2186602at2759"/>
<dbReference type="BioCyc" id="YEAST:G3O-32479-MONOMER"/>
<dbReference type="BioGRID-ORCS" id="851136">
    <property type="hits" value="4 hits in 10 CRISPR screens"/>
</dbReference>
<dbReference type="EvolutionaryTrace" id="Q06697"/>
<dbReference type="PRO" id="PR:Q06697"/>
<dbReference type="Proteomes" id="UP000002311">
    <property type="component" value="Chromosome XII"/>
</dbReference>
<dbReference type="RNAct" id="Q06697">
    <property type="molecule type" value="protein"/>
</dbReference>
<dbReference type="GO" id="GO:0016593">
    <property type="term" value="C:Cdc73/Paf1 complex"/>
    <property type="evidence" value="ECO:0000353"/>
    <property type="project" value="SGD"/>
</dbReference>
<dbReference type="GO" id="GO:0000791">
    <property type="term" value="C:euchromatin"/>
    <property type="evidence" value="ECO:0000314"/>
    <property type="project" value="SGD"/>
</dbReference>
<dbReference type="GO" id="GO:0005634">
    <property type="term" value="C:nucleus"/>
    <property type="evidence" value="ECO:0000314"/>
    <property type="project" value="SGD"/>
</dbReference>
<dbReference type="GO" id="GO:0003682">
    <property type="term" value="F:chromatin binding"/>
    <property type="evidence" value="ECO:0000314"/>
    <property type="project" value="SGD"/>
</dbReference>
<dbReference type="GO" id="GO:1990269">
    <property type="term" value="F:RNA polymerase II C-terminal domain phosphoserine binding"/>
    <property type="evidence" value="ECO:0000314"/>
    <property type="project" value="SGD"/>
</dbReference>
<dbReference type="GO" id="GO:0000993">
    <property type="term" value="F:RNA polymerase II complex binding"/>
    <property type="evidence" value="ECO:0000353"/>
    <property type="project" value="SGD"/>
</dbReference>
<dbReference type="GO" id="GO:0031124">
    <property type="term" value="P:mRNA 3'-end processing"/>
    <property type="evidence" value="ECO:0000315"/>
    <property type="project" value="SGD"/>
</dbReference>
<dbReference type="GO" id="GO:0045910">
    <property type="term" value="P:negative regulation of DNA recombination"/>
    <property type="evidence" value="ECO:0000315"/>
    <property type="project" value="SGD"/>
</dbReference>
<dbReference type="GO" id="GO:2001209">
    <property type="term" value="P:positive regulation of transcription elongation by RNA polymerase I"/>
    <property type="evidence" value="ECO:0000314"/>
    <property type="project" value="SGD"/>
</dbReference>
<dbReference type="GO" id="GO:0032968">
    <property type="term" value="P:positive regulation of transcription elongation by RNA polymerase II"/>
    <property type="evidence" value="ECO:0000315"/>
    <property type="project" value="SGD"/>
</dbReference>
<dbReference type="GO" id="GO:0090262">
    <property type="term" value="P:regulation of transcription-coupled nucleotide-excision repair"/>
    <property type="evidence" value="ECO:0000316"/>
    <property type="project" value="SGD"/>
</dbReference>
<dbReference type="GO" id="GO:0006362">
    <property type="term" value="P:transcription elongation by RNA polymerase I"/>
    <property type="evidence" value="ECO:0000315"/>
    <property type="project" value="SGD"/>
</dbReference>
<dbReference type="GO" id="GO:0006368">
    <property type="term" value="P:transcription elongation by RNA polymerase II"/>
    <property type="evidence" value="ECO:0000316"/>
    <property type="project" value="SGD"/>
</dbReference>
<dbReference type="FunFam" id="3.40.50.11990:FF:000005">
    <property type="entry name" value="Cell division cycle-related protein"/>
    <property type="match status" value="1"/>
</dbReference>
<dbReference type="Gene3D" id="3.40.50.11990">
    <property type="entry name" value="RNA polymerase II accessory factor, Cdc73 C-terminal domain"/>
    <property type="match status" value="1"/>
</dbReference>
<dbReference type="InterPro" id="IPR007852">
    <property type="entry name" value="Cdc73/Parafibromin"/>
</dbReference>
<dbReference type="InterPro" id="IPR031336">
    <property type="entry name" value="CDC73_C"/>
</dbReference>
<dbReference type="InterPro" id="IPR038103">
    <property type="entry name" value="CDC73_C_sf"/>
</dbReference>
<dbReference type="PANTHER" id="PTHR12466">
    <property type="entry name" value="CDC73 DOMAIN PROTEIN"/>
    <property type="match status" value="1"/>
</dbReference>
<dbReference type="PANTHER" id="PTHR12466:SF8">
    <property type="entry name" value="PARAFIBROMIN"/>
    <property type="match status" value="1"/>
</dbReference>
<dbReference type="Pfam" id="PF05179">
    <property type="entry name" value="CDC73_C"/>
    <property type="match status" value="1"/>
</dbReference>
<gene>
    <name type="primary">CDC73</name>
    <name type="ordered locus">YLR418C</name>
</gene>
<comment type="function">
    <text evidence="5 6 7">The PAF1 complex is a multifunctional complex. Involved in transcription initiation via genetic interactions with TATA-binding proteins. Involved in elongation. It regulates 3'-end formation of snR47 by modulating the recruitment or stable association of NRD1 and NAB3 with RNA polymerase II. Also has a role in transcription-coupled histone modification. Required for activation of RAD6 ubiquitin conjugate and the BRE1 ubiquitin ligase which ubiquitinate 'Lys-126' histone H2B. Activates the SET1 histone methyltransferase complex for methylation of 'Lys-4' of histone H3 and for methylation of 'Lys-73' of histone H3 by DOT1 and 'Lys-36' of histone H3 by SET2.</text>
</comment>
<comment type="subunit">
    <text evidence="2 3 4 7">Component of the PAF1 complex which consists of at least CDC73, CTR9, LEO1, PAF1 and RTF1. Interacts with FACT subunits POB3 and SPT16.</text>
</comment>
<comment type="interaction">
    <interactant intactId="EBI-29913">
        <id>Q06697</id>
    </interactant>
    <interactant intactId="EBI-12855">
        <id>P38351</id>
        <label>PAF1</label>
    </interactant>
    <organismsDiffer>false</organismsDiffer>
    <experiments>9</experiments>
</comment>
<comment type="interaction">
    <interactant intactId="EBI-29913">
        <id>Q06697</id>
    </interactant>
    <interactant intactId="EBI-15760">
        <id>P04050</id>
        <label>RPO21</label>
    </interactant>
    <organismsDiffer>false</organismsDiffer>
    <experiments>17</experiments>
</comment>
<comment type="interaction">
    <interactant intactId="EBI-29913">
        <id>Q06697</id>
    </interactant>
    <interactant intactId="EBI-16303">
        <id>P53064</id>
        <label>RTF1</label>
    </interactant>
    <organismsDiffer>false</organismsDiffer>
    <experiments>10</experiments>
</comment>
<comment type="interaction">
    <interactant intactId="EBI-29913">
        <id>Q06697</id>
    </interactant>
    <interactant intactId="EBI-17372">
        <id>Q00772</id>
        <label>SLT2</label>
    </interactant>
    <organismsDiffer>false</organismsDiffer>
    <experiments>2</experiments>
</comment>
<comment type="interaction">
    <interactant intactId="EBI-29913">
        <id>Q06697</id>
    </interactant>
    <interactant intactId="EBI-17937">
        <id>P27692</id>
        <label>SPT5</label>
    </interactant>
    <organismsDiffer>false</organismsDiffer>
    <experiments>6</experiments>
</comment>
<comment type="subcellular location">
    <subcellularLocation>
        <location evidence="5 7">Nucleus</location>
        <location evidence="5 7">Nucleoplasm</location>
    </subcellularLocation>
</comment>
<comment type="similarity">
    <text evidence="8">Belongs to the CDC73 family.</text>
</comment>
<accession>Q06697</accession>
<accession>D6VZ54</accession>
<keyword id="KW-0002">3D-structure</keyword>
<keyword id="KW-0010">Activator</keyword>
<keyword id="KW-0539">Nucleus</keyword>
<keyword id="KW-0597">Phosphoprotein</keyword>
<keyword id="KW-1185">Reference proteome</keyword>
<keyword id="KW-0804">Transcription</keyword>
<keyword id="KW-0805">Transcription regulation</keyword>
<evidence type="ECO:0000256" key="1">
    <source>
        <dbReference type="SAM" id="MobiDB-lite"/>
    </source>
</evidence>
<evidence type="ECO:0000269" key="2">
    <source>
    </source>
</evidence>
<evidence type="ECO:0000269" key="3">
    <source>
    </source>
</evidence>
<evidence type="ECO:0000269" key="4">
    <source>
    </source>
</evidence>
<evidence type="ECO:0000269" key="5">
    <source>
    </source>
</evidence>
<evidence type="ECO:0000269" key="6">
    <source>
    </source>
</evidence>
<evidence type="ECO:0000269" key="7">
    <source>
    </source>
</evidence>
<evidence type="ECO:0000305" key="8"/>
<evidence type="ECO:0007744" key="9">
    <source>
    </source>
</evidence>
<evidence type="ECO:0007829" key="10">
    <source>
        <dbReference type="PDB" id="3V46"/>
    </source>
</evidence>
<evidence type="ECO:0007829" key="11">
    <source>
        <dbReference type="PDB" id="4DM4"/>
    </source>
</evidence>
<evidence type="ECO:0007829" key="12">
    <source>
        <dbReference type="PDB" id="7DKH"/>
    </source>
</evidence>
<protein>
    <recommendedName>
        <fullName>Cell division control protein 73</fullName>
    </recommendedName>
    <alternativeName>
        <fullName>RNA polymerase-associated protein CDC73</fullName>
    </alternativeName>
</protein>